<accession>A9BW85</accession>
<gene>
    <name evidence="1" type="primary">fbp</name>
    <name type="ordered locus">Daci_3263</name>
</gene>
<organism>
    <name type="scientific">Delftia acidovorans (strain DSM 14801 / SPH-1)</name>
    <dbReference type="NCBI Taxonomy" id="398578"/>
    <lineage>
        <taxon>Bacteria</taxon>
        <taxon>Pseudomonadati</taxon>
        <taxon>Pseudomonadota</taxon>
        <taxon>Betaproteobacteria</taxon>
        <taxon>Burkholderiales</taxon>
        <taxon>Comamonadaceae</taxon>
        <taxon>Delftia</taxon>
    </lineage>
</organism>
<dbReference type="EC" id="3.1.3.11" evidence="1"/>
<dbReference type="EMBL" id="CP000884">
    <property type="protein sequence ID" value="ABX35901.1"/>
    <property type="molecule type" value="Genomic_DNA"/>
</dbReference>
<dbReference type="RefSeq" id="WP_012205101.1">
    <property type="nucleotide sequence ID" value="NC_010002.1"/>
</dbReference>
<dbReference type="SMR" id="A9BW85"/>
<dbReference type="STRING" id="398578.Daci_3263"/>
<dbReference type="KEGG" id="dac:Daci_3263"/>
<dbReference type="eggNOG" id="COG0158">
    <property type="taxonomic scope" value="Bacteria"/>
</dbReference>
<dbReference type="HOGENOM" id="CLU_039977_0_0_4"/>
<dbReference type="UniPathway" id="UPA00138"/>
<dbReference type="Proteomes" id="UP000000784">
    <property type="component" value="Chromosome"/>
</dbReference>
<dbReference type="GO" id="GO:0005829">
    <property type="term" value="C:cytosol"/>
    <property type="evidence" value="ECO:0007669"/>
    <property type="project" value="TreeGrafter"/>
</dbReference>
<dbReference type="GO" id="GO:0042132">
    <property type="term" value="F:fructose 1,6-bisphosphate 1-phosphatase activity"/>
    <property type="evidence" value="ECO:0007669"/>
    <property type="project" value="UniProtKB-UniRule"/>
</dbReference>
<dbReference type="GO" id="GO:0000287">
    <property type="term" value="F:magnesium ion binding"/>
    <property type="evidence" value="ECO:0007669"/>
    <property type="project" value="UniProtKB-UniRule"/>
</dbReference>
<dbReference type="GO" id="GO:0030388">
    <property type="term" value="P:fructose 1,6-bisphosphate metabolic process"/>
    <property type="evidence" value="ECO:0007669"/>
    <property type="project" value="TreeGrafter"/>
</dbReference>
<dbReference type="GO" id="GO:0006002">
    <property type="term" value="P:fructose 6-phosphate metabolic process"/>
    <property type="evidence" value="ECO:0007669"/>
    <property type="project" value="TreeGrafter"/>
</dbReference>
<dbReference type="GO" id="GO:0006000">
    <property type="term" value="P:fructose metabolic process"/>
    <property type="evidence" value="ECO:0007669"/>
    <property type="project" value="TreeGrafter"/>
</dbReference>
<dbReference type="GO" id="GO:0006094">
    <property type="term" value="P:gluconeogenesis"/>
    <property type="evidence" value="ECO:0007669"/>
    <property type="project" value="UniProtKB-UniRule"/>
</dbReference>
<dbReference type="GO" id="GO:0005986">
    <property type="term" value="P:sucrose biosynthetic process"/>
    <property type="evidence" value="ECO:0007669"/>
    <property type="project" value="TreeGrafter"/>
</dbReference>
<dbReference type="CDD" id="cd00354">
    <property type="entry name" value="FBPase"/>
    <property type="match status" value="1"/>
</dbReference>
<dbReference type="FunFam" id="3.30.540.10:FF:000006">
    <property type="entry name" value="Fructose-1,6-bisphosphatase class 1"/>
    <property type="match status" value="1"/>
</dbReference>
<dbReference type="FunFam" id="3.40.190.80:FF:000011">
    <property type="entry name" value="Fructose-1,6-bisphosphatase class 1"/>
    <property type="match status" value="1"/>
</dbReference>
<dbReference type="Gene3D" id="3.40.190.80">
    <property type="match status" value="1"/>
</dbReference>
<dbReference type="Gene3D" id="3.30.540.10">
    <property type="entry name" value="Fructose-1,6-Bisphosphatase, subunit A, domain 1"/>
    <property type="match status" value="1"/>
</dbReference>
<dbReference type="HAMAP" id="MF_01855">
    <property type="entry name" value="FBPase_class1"/>
    <property type="match status" value="1"/>
</dbReference>
<dbReference type="InterPro" id="IPR044015">
    <property type="entry name" value="FBPase_C_dom"/>
</dbReference>
<dbReference type="InterPro" id="IPR000146">
    <property type="entry name" value="FBPase_class-1"/>
</dbReference>
<dbReference type="InterPro" id="IPR033391">
    <property type="entry name" value="FBPase_N"/>
</dbReference>
<dbReference type="InterPro" id="IPR028343">
    <property type="entry name" value="FBPtase"/>
</dbReference>
<dbReference type="NCBIfam" id="NF006778">
    <property type="entry name" value="PRK09293.1-1"/>
    <property type="match status" value="1"/>
</dbReference>
<dbReference type="NCBIfam" id="NF006779">
    <property type="entry name" value="PRK09293.1-3"/>
    <property type="match status" value="1"/>
</dbReference>
<dbReference type="NCBIfam" id="NF006780">
    <property type="entry name" value="PRK09293.1-4"/>
    <property type="match status" value="1"/>
</dbReference>
<dbReference type="PANTHER" id="PTHR11556">
    <property type="entry name" value="FRUCTOSE-1,6-BISPHOSPHATASE-RELATED"/>
    <property type="match status" value="1"/>
</dbReference>
<dbReference type="PANTHER" id="PTHR11556:SF35">
    <property type="entry name" value="SEDOHEPTULOSE-1,7-BISPHOSPHATASE, CHLOROPLASTIC"/>
    <property type="match status" value="1"/>
</dbReference>
<dbReference type="Pfam" id="PF00316">
    <property type="entry name" value="FBPase"/>
    <property type="match status" value="1"/>
</dbReference>
<dbReference type="Pfam" id="PF18913">
    <property type="entry name" value="FBPase_C"/>
    <property type="match status" value="1"/>
</dbReference>
<dbReference type="PIRSF" id="PIRSF500210">
    <property type="entry name" value="FBPtase"/>
    <property type="match status" value="1"/>
</dbReference>
<dbReference type="PIRSF" id="PIRSF000904">
    <property type="entry name" value="FBPtase_SBPase"/>
    <property type="match status" value="1"/>
</dbReference>
<dbReference type="PRINTS" id="PR00115">
    <property type="entry name" value="F16BPHPHTASE"/>
</dbReference>
<dbReference type="SUPFAM" id="SSF56655">
    <property type="entry name" value="Carbohydrate phosphatase"/>
    <property type="match status" value="1"/>
</dbReference>
<protein>
    <recommendedName>
        <fullName evidence="1">Fructose-1,6-bisphosphatase class 1</fullName>
        <shortName evidence="1">FBPase class 1</shortName>
        <ecNumber evidence="1">3.1.3.11</ecNumber>
    </recommendedName>
    <alternativeName>
        <fullName evidence="1">D-fructose-1,6-bisphosphate 1-phosphohydrolase class 1</fullName>
    </alternativeName>
</protein>
<keyword id="KW-0119">Carbohydrate metabolism</keyword>
<keyword id="KW-0963">Cytoplasm</keyword>
<keyword id="KW-0378">Hydrolase</keyword>
<keyword id="KW-0460">Magnesium</keyword>
<keyword id="KW-0479">Metal-binding</keyword>
<keyword id="KW-1185">Reference proteome</keyword>
<evidence type="ECO:0000255" key="1">
    <source>
        <dbReference type="HAMAP-Rule" id="MF_01855"/>
    </source>
</evidence>
<comment type="catalytic activity">
    <reaction evidence="1">
        <text>beta-D-fructose 1,6-bisphosphate + H2O = beta-D-fructose 6-phosphate + phosphate</text>
        <dbReference type="Rhea" id="RHEA:11064"/>
        <dbReference type="ChEBI" id="CHEBI:15377"/>
        <dbReference type="ChEBI" id="CHEBI:32966"/>
        <dbReference type="ChEBI" id="CHEBI:43474"/>
        <dbReference type="ChEBI" id="CHEBI:57634"/>
        <dbReference type="EC" id="3.1.3.11"/>
    </reaction>
</comment>
<comment type="cofactor">
    <cofactor evidence="1">
        <name>Mg(2+)</name>
        <dbReference type="ChEBI" id="CHEBI:18420"/>
    </cofactor>
    <text evidence="1">Binds 2 magnesium ions per subunit.</text>
</comment>
<comment type="pathway">
    <text evidence="1">Carbohydrate biosynthesis; gluconeogenesis.</text>
</comment>
<comment type="subunit">
    <text evidence="1">Homotetramer.</text>
</comment>
<comment type="subcellular location">
    <subcellularLocation>
        <location evidence="1">Cytoplasm</location>
    </subcellularLocation>
</comment>
<comment type="similarity">
    <text evidence="1">Belongs to the FBPase class 1 family.</text>
</comment>
<name>F16PA_DELAS</name>
<reference key="1">
    <citation type="submission" date="2007-11" db="EMBL/GenBank/DDBJ databases">
        <title>Complete sequence of Delftia acidovorans DSM 14801 / SPH-1.</title>
        <authorList>
            <person name="Copeland A."/>
            <person name="Lucas S."/>
            <person name="Lapidus A."/>
            <person name="Barry K."/>
            <person name="Glavina del Rio T."/>
            <person name="Dalin E."/>
            <person name="Tice H."/>
            <person name="Pitluck S."/>
            <person name="Lowry S."/>
            <person name="Clum A."/>
            <person name="Schmutz J."/>
            <person name="Larimer F."/>
            <person name="Land M."/>
            <person name="Hauser L."/>
            <person name="Kyrpides N."/>
            <person name="Kim E."/>
            <person name="Schleheck D."/>
            <person name="Richardson P."/>
        </authorList>
    </citation>
    <scope>NUCLEOTIDE SEQUENCE [LARGE SCALE GENOMIC DNA]</scope>
    <source>
        <strain>DSM 14801 / SPH-1</strain>
    </source>
</reference>
<feature type="chain" id="PRO_0000364536" description="Fructose-1,6-bisphosphatase class 1">
    <location>
        <begin position="1"/>
        <end position="335"/>
    </location>
</feature>
<feature type="binding site" evidence="1">
    <location>
        <position position="92"/>
    </location>
    <ligand>
        <name>Mg(2+)</name>
        <dbReference type="ChEBI" id="CHEBI:18420"/>
        <label>1</label>
    </ligand>
</feature>
<feature type="binding site" evidence="1">
    <location>
        <position position="114"/>
    </location>
    <ligand>
        <name>Mg(2+)</name>
        <dbReference type="ChEBI" id="CHEBI:18420"/>
        <label>1</label>
    </ligand>
</feature>
<feature type="binding site" evidence="1">
    <location>
        <position position="114"/>
    </location>
    <ligand>
        <name>Mg(2+)</name>
        <dbReference type="ChEBI" id="CHEBI:18420"/>
        <label>2</label>
    </ligand>
</feature>
<feature type="binding site" evidence="1">
    <location>
        <position position="116"/>
    </location>
    <ligand>
        <name>Mg(2+)</name>
        <dbReference type="ChEBI" id="CHEBI:18420"/>
        <label>1</label>
    </ligand>
</feature>
<feature type="binding site" evidence="1">
    <location>
        <begin position="117"/>
        <end position="120"/>
    </location>
    <ligand>
        <name>substrate</name>
    </ligand>
</feature>
<feature type="binding site" evidence="1">
    <location>
        <position position="117"/>
    </location>
    <ligand>
        <name>Mg(2+)</name>
        <dbReference type="ChEBI" id="CHEBI:18420"/>
        <label>2</label>
    </ligand>
</feature>
<feature type="binding site" evidence="1">
    <location>
        <position position="209"/>
    </location>
    <ligand>
        <name>substrate</name>
    </ligand>
</feature>
<feature type="binding site" evidence="1">
    <location>
        <position position="275"/>
    </location>
    <ligand>
        <name>substrate</name>
    </ligand>
</feature>
<feature type="binding site" evidence="1">
    <location>
        <position position="281"/>
    </location>
    <ligand>
        <name>Mg(2+)</name>
        <dbReference type="ChEBI" id="CHEBI:18420"/>
        <label>2</label>
    </ligand>
</feature>
<sequence>MKKNVSLTRYLVEQQRVDGLIPGQLRLLLEVVARACKRISQSVNKGAIGDVLGTAGSENVQGEVQKKLDIIANEVLIEANEWGGHLAAMASEEMEGIYLVPNRYPHGEYLLMFDPLDGSSNIDVNVSIGTIFSVLKKPEGHPGVTEQDFMQPGTQQVAAGYCIYGPQTTLVLTVGDGVSMFTLDREQGSFVLVQENIRIPEDTKEFAINMSNMRHWDTPVKRYVDECLAGVEGPRGKDFNMRWIASMVADVHRIMTRGGIFMYPWDRREPNKPGKLRLMYEANPMAWLVEQAGGAATNGKQRILDIQPTQLHERVSVILGSKNEVEKVTQYHSEA</sequence>
<proteinExistence type="inferred from homology"/>